<protein>
    <recommendedName>
        <fullName evidence="1">tRNA(Ile)-lysidine synthase</fullName>
        <ecNumber evidence="1">6.3.4.19</ecNumber>
    </recommendedName>
    <alternativeName>
        <fullName evidence="1">tRNA(Ile)-2-lysyl-cytidine synthase</fullName>
    </alternativeName>
    <alternativeName>
        <fullName evidence="1">tRNA(Ile)-lysidine synthetase</fullName>
    </alternativeName>
</protein>
<evidence type="ECO:0000255" key="1">
    <source>
        <dbReference type="HAMAP-Rule" id="MF_01161"/>
    </source>
</evidence>
<gene>
    <name evidence="1" type="primary">tilS</name>
    <name type="ordered locus">XCC2598</name>
</gene>
<name>TILS_XANCP</name>
<sequence length="435" mass="47552">MDVMQAAGLIPATPPAPVLVAYSGGMDSAVLLHALAATDGYREAGLRAVHVHHGLHADADAWALHCQQQCADLGIALQVVRVQVARDSGSGLEAAARAARHAAFAATLAAGEWLALAHHRDDQAETFLLRALRASGPDGLAAMRPQRPFGPGTLWRPLLGHARADLAAYAQAHAVRWIDDPSNTDPQHERNFLRTQVLPALQQRWPLAADALARSAQLCGDASTLLHDDDVNLLPTVCNSAGALELQPLRSHSPARRARLLRAWVAAAHAPPLPAQGVHALEREIATTQPDRQTCFAWQQTEIRRWRQQLYLLSARATWPAQWQAEWNGDSTLLLPDGAQLQLRGTPGLRFEQPLQVRARQGGERIVLPGRTHSHQLKHLLQQSDLPPWERTRLPLLWAGKTLLAAGDQIVSAKLDQWLRAHAARLQWRSAAPAN</sequence>
<accession>Q8P7L3</accession>
<keyword id="KW-0067">ATP-binding</keyword>
<keyword id="KW-0963">Cytoplasm</keyword>
<keyword id="KW-0436">Ligase</keyword>
<keyword id="KW-0547">Nucleotide-binding</keyword>
<keyword id="KW-1185">Reference proteome</keyword>
<keyword id="KW-0819">tRNA processing</keyword>
<dbReference type="EC" id="6.3.4.19" evidence="1"/>
<dbReference type="EMBL" id="AE008922">
    <property type="protein sequence ID" value="AAM41870.1"/>
    <property type="molecule type" value="Genomic_DNA"/>
</dbReference>
<dbReference type="RefSeq" id="NP_637946.1">
    <property type="nucleotide sequence ID" value="NC_003902.1"/>
</dbReference>
<dbReference type="SMR" id="Q8P7L3"/>
<dbReference type="STRING" id="190485.XCC2598"/>
<dbReference type="EnsemblBacteria" id="AAM41870">
    <property type="protein sequence ID" value="AAM41870"/>
    <property type="gene ID" value="XCC2598"/>
</dbReference>
<dbReference type="KEGG" id="xcc:XCC2598"/>
<dbReference type="PATRIC" id="fig|190485.4.peg.2766"/>
<dbReference type="eggNOG" id="COG0037">
    <property type="taxonomic scope" value="Bacteria"/>
</dbReference>
<dbReference type="HOGENOM" id="CLU_018869_2_0_6"/>
<dbReference type="OrthoDB" id="9807403at2"/>
<dbReference type="Proteomes" id="UP000001010">
    <property type="component" value="Chromosome"/>
</dbReference>
<dbReference type="GO" id="GO:0005737">
    <property type="term" value="C:cytoplasm"/>
    <property type="evidence" value="ECO:0007669"/>
    <property type="project" value="UniProtKB-SubCell"/>
</dbReference>
<dbReference type="GO" id="GO:0005524">
    <property type="term" value="F:ATP binding"/>
    <property type="evidence" value="ECO:0007669"/>
    <property type="project" value="UniProtKB-UniRule"/>
</dbReference>
<dbReference type="GO" id="GO:0032267">
    <property type="term" value="F:tRNA(Ile)-lysidine synthase activity"/>
    <property type="evidence" value="ECO:0007669"/>
    <property type="project" value="UniProtKB-EC"/>
</dbReference>
<dbReference type="GO" id="GO:0006400">
    <property type="term" value="P:tRNA modification"/>
    <property type="evidence" value="ECO:0007669"/>
    <property type="project" value="UniProtKB-UniRule"/>
</dbReference>
<dbReference type="CDD" id="cd01992">
    <property type="entry name" value="TilS_N"/>
    <property type="match status" value="1"/>
</dbReference>
<dbReference type="Gene3D" id="1.20.59.20">
    <property type="match status" value="1"/>
</dbReference>
<dbReference type="Gene3D" id="3.40.50.620">
    <property type="entry name" value="HUPs"/>
    <property type="match status" value="1"/>
</dbReference>
<dbReference type="HAMAP" id="MF_01161">
    <property type="entry name" value="tRNA_Ile_lys_synt"/>
    <property type="match status" value="1"/>
</dbReference>
<dbReference type="InterPro" id="IPR012796">
    <property type="entry name" value="Lysidine-tRNA-synth_C"/>
</dbReference>
<dbReference type="InterPro" id="IPR014729">
    <property type="entry name" value="Rossmann-like_a/b/a_fold"/>
</dbReference>
<dbReference type="InterPro" id="IPR011063">
    <property type="entry name" value="TilS/TtcA_N"/>
</dbReference>
<dbReference type="InterPro" id="IPR012094">
    <property type="entry name" value="tRNA_Ile_lys_synt"/>
</dbReference>
<dbReference type="InterPro" id="IPR012795">
    <property type="entry name" value="tRNA_Ile_lys_synt_N"/>
</dbReference>
<dbReference type="InterPro" id="IPR015262">
    <property type="entry name" value="tRNA_Ile_lys_synt_subst-bd"/>
</dbReference>
<dbReference type="NCBIfam" id="TIGR02433">
    <property type="entry name" value="lysidine_TilS_C"/>
    <property type="match status" value="1"/>
</dbReference>
<dbReference type="NCBIfam" id="TIGR02432">
    <property type="entry name" value="lysidine_TilS_N"/>
    <property type="match status" value="1"/>
</dbReference>
<dbReference type="PANTHER" id="PTHR43033">
    <property type="entry name" value="TRNA(ILE)-LYSIDINE SYNTHASE-RELATED"/>
    <property type="match status" value="1"/>
</dbReference>
<dbReference type="PANTHER" id="PTHR43033:SF1">
    <property type="entry name" value="TRNA(ILE)-LYSIDINE SYNTHASE-RELATED"/>
    <property type="match status" value="1"/>
</dbReference>
<dbReference type="Pfam" id="PF01171">
    <property type="entry name" value="ATP_bind_3"/>
    <property type="match status" value="1"/>
</dbReference>
<dbReference type="Pfam" id="PF09179">
    <property type="entry name" value="TilS"/>
    <property type="match status" value="1"/>
</dbReference>
<dbReference type="Pfam" id="PF11734">
    <property type="entry name" value="TilS_C"/>
    <property type="match status" value="1"/>
</dbReference>
<dbReference type="SMART" id="SM00977">
    <property type="entry name" value="TilS_C"/>
    <property type="match status" value="1"/>
</dbReference>
<dbReference type="SUPFAM" id="SSF52402">
    <property type="entry name" value="Adenine nucleotide alpha hydrolases-like"/>
    <property type="match status" value="1"/>
</dbReference>
<dbReference type="SUPFAM" id="SSF82829">
    <property type="entry name" value="MesJ substrate recognition domain-like"/>
    <property type="match status" value="1"/>
</dbReference>
<dbReference type="SUPFAM" id="SSF56037">
    <property type="entry name" value="PheT/TilS domain"/>
    <property type="match status" value="1"/>
</dbReference>
<feature type="chain" id="PRO_0000181808" description="tRNA(Ile)-lysidine synthase">
    <location>
        <begin position="1"/>
        <end position="435"/>
    </location>
</feature>
<feature type="binding site" evidence="1">
    <location>
        <begin position="23"/>
        <end position="28"/>
    </location>
    <ligand>
        <name>ATP</name>
        <dbReference type="ChEBI" id="CHEBI:30616"/>
    </ligand>
</feature>
<organism>
    <name type="scientific">Xanthomonas campestris pv. campestris (strain ATCC 33913 / DSM 3586 / NCPPB 528 / LMG 568 / P 25)</name>
    <dbReference type="NCBI Taxonomy" id="190485"/>
    <lineage>
        <taxon>Bacteria</taxon>
        <taxon>Pseudomonadati</taxon>
        <taxon>Pseudomonadota</taxon>
        <taxon>Gammaproteobacteria</taxon>
        <taxon>Lysobacterales</taxon>
        <taxon>Lysobacteraceae</taxon>
        <taxon>Xanthomonas</taxon>
    </lineage>
</organism>
<comment type="function">
    <text evidence="1">Ligates lysine onto the cytidine present at position 34 of the AUA codon-specific tRNA(Ile) that contains the anticodon CAU, in an ATP-dependent manner. Cytidine is converted to lysidine, thus changing the amino acid specificity of the tRNA from methionine to isoleucine.</text>
</comment>
<comment type="catalytic activity">
    <reaction evidence="1">
        <text>cytidine(34) in tRNA(Ile2) + L-lysine + ATP = lysidine(34) in tRNA(Ile2) + AMP + diphosphate + H(+)</text>
        <dbReference type="Rhea" id="RHEA:43744"/>
        <dbReference type="Rhea" id="RHEA-COMP:10625"/>
        <dbReference type="Rhea" id="RHEA-COMP:10670"/>
        <dbReference type="ChEBI" id="CHEBI:15378"/>
        <dbReference type="ChEBI" id="CHEBI:30616"/>
        <dbReference type="ChEBI" id="CHEBI:32551"/>
        <dbReference type="ChEBI" id="CHEBI:33019"/>
        <dbReference type="ChEBI" id="CHEBI:82748"/>
        <dbReference type="ChEBI" id="CHEBI:83665"/>
        <dbReference type="ChEBI" id="CHEBI:456215"/>
        <dbReference type="EC" id="6.3.4.19"/>
    </reaction>
</comment>
<comment type="subcellular location">
    <subcellularLocation>
        <location evidence="1">Cytoplasm</location>
    </subcellularLocation>
</comment>
<comment type="domain">
    <text>The N-terminal region contains the highly conserved SGGXDS motif, predicted to be a P-loop motif involved in ATP binding.</text>
</comment>
<comment type="similarity">
    <text evidence="1">Belongs to the tRNA(Ile)-lysidine synthase family.</text>
</comment>
<proteinExistence type="inferred from homology"/>
<reference key="1">
    <citation type="journal article" date="2002" name="Nature">
        <title>Comparison of the genomes of two Xanthomonas pathogens with differing host specificities.</title>
        <authorList>
            <person name="da Silva A.C.R."/>
            <person name="Ferro J.A."/>
            <person name="Reinach F.C."/>
            <person name="Farah C.S."/>
            <person name="Furlan L.R."/>
            <person name="Quaggio R.B."/>
            <person name="Monteiro-Vitorello C.B."/>
            <person name="Van Sluys M.A."/>
            <person name="Almeida N.F. Jr."/>
            <person name="Alves L.M.C."/>
            <person name="do Amaral A.M."/>
            <person name="Bertolini M.C."/>
            <person name="Camargo L.E.A."/>
            <person name="Camarotte G."/>
            <person name="Cannavan F."/>
            <person name="Cardozo J."/>
            <person name="Chambergo F."/>
            <person name="Ciapina L.P."/>
            <person name="Cicarelli R.M.B."/>
            <person name="Coutinho L.L."/>
            <person name="Cursino-Santos J.R."/>
            <person name="El-Dorry H."/>
            <person name="Faria J.B."/>
            <person name="Ferreira A.J.S."/>
            <person name="Ferreira R.C.C."/>
            <person name="Ferro M.I.T."/>
            <person name="Formighieri E.F."/>
            <person name="Franco M.C."/>
            <person name="Greggio C.C."/>
            <person name="Gruber A."/>
            <person name="Katsuyama A.M."/>
            <person name="Kishi L.T."/>
            <person name="Leite R.P."/>
            <person name="Lemos E.G.M."/>
            <person name="Lemos M.V.F."/>
            <person name="Locali E.C."/>
            <person name="Machado M.A."/>
            <person name="Madeira A.M.B.N."/>
            <person name="Martinez-Rossi N.M."/>
            <person name="Martins E.C."/>
            <person name="Meidanis J."/>
            <person name="Menck C.F.M."/>
            <person name="Miyaki C.Y."/>
            <person name="Moon D.H."/>
            <person name="Moreira L.M."/>
            <person name="Novo M.T.M."/>
            <person name="Okura V.K."/>
            <person name="Oliveira M.C."/>
            <person name="Oliveira V.R."/>
            <person name="Pereira H.A."/>
            <person name="Rossi A."/>
            <person name="Sena J.A.D."/>
            <person name="Silva C."/>
            <person name="de Souza R.F."/>
            <person name="Spinola L.A.F."/>
            <person name="Takita M.A."/>
            <person name="Tamura R.E."/>
            <person name="Teixeira E.C."/>
            <person name="Tezza R.I.D."/>
            <person name="Trindade dos Santos M."/>
            <person name="Truffi D."/>
            <person name="Tsai S.M."/>
            <person name="White F.F."/>
            <person name="Setubal J.C."/>
            <person name="Kitajima J.P."/>
        </authorList>
    </citation>
    <scope>NUCLEOTIDE SEQUENCE [LARGE SCALE GENOMIC DNA]</scope>
    <source>
        <strain>ATCC 33913 / DSM 3586 / NCPPB 528 / LMG 568 / P 25</strain>
    </source>
</reference>